<sequence length="183" mass="21100">MDIDPYKEFGATVELLSFLPSDFFPSVRDLLDTASALYREALESPEHCSPHHTALRQAILCWGELMTLATWVGVNLEDPASRDLVVSYVNTNMGLKFRQLLWFHISCLTFGRETVIEYLVAFGVWIRTPPAYRPPNAPILSTLPETTVVRRRGRSPRRRTPSPRRRRSQSPRRRRSQSRESQC</sequence>
<comment type="function">
    <text evidence="1">Self assembles to form an icosahedral capsid. Most capsids appear to be large particles with an icosahedral symmetry of T=4 and consist of 240 copies of capsid protein, though a fraction forms smaller T=3 particles consisting of 180 capsid proteins. Entering capsids are transported along microtubules to the nucleus. Phosphorylation of the capsid is thought to induce exposure of nuclear localization signal in the C-terminal portion of the capsid protein that allows binding to the nuclear pore complex via the importin (karyopherin-) alpha and beta. Capsids are imported in intact form through the nuclear pore into the nuclear basket, where it probably binds NUP153. Only capsids that contain the mature viral genome can release the viral DNA and capsid protein into the nucleoplasm. Immature capsids get stuck in the basket. Capsids encapsulate the pre-genomic RNA and the P protein. Pre-genomic RNA is reverse-transcribed into DNA while the capsid is still in the cytoplasm. The capsid can then either be directed to the nucleus, providing more genomes for transcription, or bud through the endoplasmic reticulum to provide new virions.</text>
</comment>
<comment type="subunit">
    <text evidence="1">Homodimerizes, then multimerizes. Interacts with cytosol exposed regions of viral L glycoprotein present in the reticulum-to-Golgi compartment. Interacts with human FLNB. Phosphorylated form interacts with host importin alpha; this interaction depends on the exposure of the NLS, which itself depends upon genome maturation and/or phosphorylation of the capsid protein. Interacts with host NUP153.</text>
</comment>
<comment type="subcellular location">
    <subcellularLocation>
        <location evidence="1">Virion</location>
    </subcellularLocation>
    <subcellularLocation>
        <location evidence="1">Host cytoplasm</location>
    </subcellularLocation>
</comment>
<comment type="alternative products">
    <event type="alternative initiation"/>
    <isoform>
        <id>P0C6I2-1</id>
        <name>Capsid protein</name>
        <sequence type="displayed"/>
    </isoform>
    <isoform>
        <id>Q67876-1</id>
        <name>External core antigen</name>
        <sequence type="external"/>
    </isoform>
</comment>
<comment type="PTM">
    <text evidence="1">Phosphorylated by host SRPK1, SRPK2, and maybe protein kinase C or GAPDH. Phosphorylation is critical for pregenomic RNA packaging. Protein kinase C phosphorylation is stimulated by HBx protein and may play a role in transport of the viral genome to the nucleus at the late step during the viral replication cycle.</text>
</comment>
<comment type="similarity">
    <text evidence="1">Belongs to the orthohepadnavirus core antigen family.</text>
</comment>
<feature type="chain" id="PRO_0000324372" description="Capsid protein">
    <location>
        <begin position="1"/>
        <end position="183"/>
    </location>
</feature>
<feature type="repeat" description="1; half-length">
    <location>
        <begin position="155"/>
        <end position="161"/>
    </location>
</feature>
<feature type="repeat" description="2">
    <location>
        <begin position="162"/>
        <end position="169"/>
    </location>
</feature>
<feature type="repeat" description="3">
    <location>
        <begin position="170"/>
        <end position="177"/>
    </location>
</feature>
<feature type="region of interest" description="Disordered" evidence="2">
    <location>
        <begin position="136"/>
        <end position="183"/>
    </location>
</feature>
<feature type="region of interest" description="3 X 8 AA repeats of S-P-R-R-R-[PR]-S-Q">
    <location>
        <begin position="155"/>
        <end position="177"/>
    </location>
</feature>
<feature type="region of interest" description="RNA binding" evidence="1">
    <location>
        <begin position="177"/>
        <end position="183"/>
    </location>
</feature>
<feature type="short sequence motif" description="Bipartite nuclear localization signal" evidence="1">
    <location>
        <begin position="158"/>
        <end position="175"/>
    </location>
</feature>
<feature type="compositionally biased region" description="Basic residues" evidence="2">
    <location>
        <begin position="149"/>
        <end position="176"/>
    </location>
</feature>
<feature type="modified residue" description="Phosphoserine; by host" evidence="1">
    <location>
        <position position="155"/>
    </location>
</feature>
<feature type="modified residue" description="Phosphoserine; by host" evidence="1">
    <location>
        <position position="162"/>
    </location>
</feature>
<feature type="modified residue" description="Phosphoserine; by host" evidence="1">
    <location>
        <position position="170"/>
    </location>
</feature>
<dbReference type="EMBL" id="X65258">
    <property type="status" value="NOT_ANNOTATED_CDS"/>
    <property type="molecule type" value="Genomic_DNA"/>
</dbReference>
<dbReference type="SMR" id="P0C6I2"/>
<dbReference type="Proteomes" id="UP000008282">
    <property type="component" value="Genome"/>
</dbReference>
<dbReference type="GO" id="GO:0043657">
    <property type="term" value="C:host cell"/>
    <property type="evidence" value="ECO:0007669"/>
    <property type="project" value="GOC"/>
</dbReference>
<dbReference type="GO" id="GO:0030430">
    <property type="term" value="C:host cell cytoplasm"/>
    <property type="evidence" value="ECO:0007669"/>
    <property type="project" value="UniProtKB-SubCell"/>
</dbReference>
<dbReference type="GO" id="GO:0039619">
    <property type="term" value="C:T=4 icosahedral viral capsid"/>
    <property type="evidence" value="ECO:0007669"/>
    <property type="project" value="UniProtKB-UniRule"/>
</dbReference>
<dbReference type="GO" id="GO:0003677">
    <property type="term" value="F:DNA binding"/>
    <property type="evidence" value="ECO:0007669"/>
    <property type="project" value="UniProtKB-UniRule"/>
</dbReference>
<dbReference type="GO" id="GO:0003723">
    <property type="term" value="F:RNA binding"/>
    <property type="evidence" value="ECO:0007669"/>
    <property type="project" value="UniProtKB-UniRule"/>
</dbReference>
<dbReference type="GO" id="GO:0005198">
    <property type="term" value="F:structural molecule activity"/>
    <property type="evidence" value="ECO:0007669"/>
    <property type="project" value="UniProtKB-UniRule"/>
</dbReference>
<dbReference type="GO" id="GO:0075521">
    <property type="term" value="P:microtubule-dependent intracellular transport of viral material towards nucleus"/>
    <property type="evidence" value="ECO:0007669"/>
    <property type="project" value="UniProtKB-UniRule"/>
</dbReference>
<dbReference type="GO" id="GO:0046718">
    <property type="term" value="P:symbiont entry into host cell"/>
    <property type="evidence" value="ECO:0007669"/>
    <property type="project" value="UniProtKB-UniRule"/>
</dbReference>
<dbReference type="GO" id="GO:0075732">
    <property type="term" value="P:viral penetration into host nucleus"/>
    <property type="evidence" value="ECO:0007669"/>
    <property type="project" value="UniProtKB-UniRule"/>
</dbReference>
<dbReference type="FunFam" id="1.10.4090.10:FF:000001">
    <property type="entry name" value="Capsid protein"/>
    <property type="match status" value="1"/>
</dbReference>
<dbReference type="Gene3D" id="1.10.4090.10">
    <property type="entry name" value="Viral capsid, core domain supefamily, Hepatitis B virus"/>
    <property type="match status" value="1"/>
</dbReference>
<dbReference type="HAMAP" id="MF_04076">
    <property type="entry name" value="HBV_HBEAG"/>
    <property type="match status" value="1"/>
</dbReference>
<dbReference type="InterPro" id="IPR002006">
    <property type="entry name" value="Hepatitis_core"/>
</dbReference>
<dbReference type="InterPro" id="IPR036459">
    <property type="entry name" value="Viral_capsid_core_dom_sf_HBV"/>
</dbReference>
<dbReference type="Pfam" id="PF00906">
    <property type="entry name" value="Hepatitis_core"/>
    <property type="match status" value="3"/>
</dbReference>
<dbReference type="SUPFAM" id="SSF47852">
    <property type="entry name" value="Hepatitis B viral capsid (hbcag)"/>
    <property type="match status" value="1"/>
</dbReference>
<reference key="1">
    <citation type="submission" date="1992-03" db="EMBL/GenBank/DDBJ databases">
        <title>Sequence analysis of HBV genomes isolated from patients with HBsAg negative chronic liver disease.</title>
        <authorList>
            <person name="Lai M.E."/>
            <person name="Mazzoleni A.P."/>
            <person name="Balestrieri A."/>
            <person name="Melis A."/>
            <person name="Porru A."/>
        </authorList>
    </citation>
    <scope>NUCLEOTIDE SEQUENCE [GENOMIC DNA]</scope>
</reference>
<keyword id="KW-0024">Alternative initiation</keyword>
<keyword id="KW-0167">Capsid protein</keyword>
<keyword id="KW-1176">Cytoplasmic inwards viral transport</keyword>
<keyword id="KW-0238">DNA-binding</keyword>
<keyword id="KW-1035">Host cytoplasm</keyword>
<keyword id="KW-0945">Host-virus interaction</keyword>
<keyword id="KW-1177">Microtubular inwards viral transport</keyword>
<keyword id="KW-0597">Phosphoprotein</keyword>
<keyword id="KW-0677">Repeat</keyword>
<keyword id="KW-0694">RNA-binding</keyword>
<keyword id="KW-1144">T=4 icosahedral capsid protein</keyword>
<keyword id="KW-1163">Viral penetration into host nucleus</keyword>
<keyword id="KW-0946">Virion</keyword>
<keyword id="KW-1160">Virus entry into host cell</keyword>
<evidence type="ECO:0000255" key="1">
    <source>
        <dbReference type="HAMAP-Rule" id="MF_04076"/>
    </source>
</evidence>
<evidence type="ECO:0000256" key="2">
    <source>
        <dbReference type="SAM" id="MobiDB-lite"/>
    </source>
</evidence>
<organism>
    <name type="scientific">Hepatitis B virus genotype D subtype ayw (isolate Italy/CI/1992)</name>
    <name type="common">HBV-D</name>
    <dbReference type="NCBI Taxonomy" id="489489"/>
    <lineage>
        <taxon>Viruses</taxon>
        <taxon>Riboviria</taxon>
        <taxon>Pararnavirae</taxon>
        <taxon>Artverviricota</taxon>
        <taxon>Revtraviricetes</taxon>
        <taxon>Blubervirales</taxon>
        <taxon>Hepadnaviridae</taxon>
        <taxon>Orthohepadnavirus</taxon>
        <taxon>Hepatitis B virus</taxon>
        <taxon>hepatitis B virus genotype D</taxon>
    </lineage>
</organism>
<protein>
    <recommendedName>
        <fullName evidence="1">Capsid protein</fullName>
    </recommendedName>
    <alternativeName>
        <fullName evidence="1">Core antigen</fullName>
    </alternativeName>
    <alternativeName>
        <fullName evidence="1">Core protein</fullName>
    </alternativeName>
    <alternativeName>
        <fullName evidence="1">HBcAg</fullName>
    </alternativeName>
    <alternativeName>
        <fullName evidence="1">p21.5</fullName>
    </alternativeName>
</protein>
<accession>P0C6I2</accession>
<organismHost>
    <name type="scientific">Homo sapiens</name>
    <name type="common">Human</name>
    <dbReference type="NCBI Taxonomy" id="9606"/>
</organismHost>
<organismHost>
    <name type="scientific">Pan troglodytes</name>
    <name type="common">Chimpanzee</name>
    <dbReference type="NCBI Taxonomy" id="9598"/>
</organismHost>
<proteinExistence type="inferred from homology"/>
<gene>
    <name evidence="1" type="primary">C</name>
</gene>
<name>CAPSD_HBVD6</name>